<gene>
    <name type="primary">CDC23</name>
    <name type="ordered locus">YHR166C</name>
</gene>
<dbReference type="EMBL" id="D00610">
    <property type="protein sequence ID" value="BAA00485.1"/>
    <property type="molecule type" value="Genomic_DNA"/>
</dbReference>
<dbReference type="EMBL" id="U00027">
    <property type="protein sequence ID" value="AAB68012.1"/>
    <property type="molecule type" value="Genomic_DNA"/>
</dbReference>
<dbReference type="EMBL" id="BK006934">
    <property type="protein sequence ID" value="DAA06859.1"/>
    <property type="molecule type" value="Genomic_DNA"/>
</dbReference>
<dbReference type="PIR" id="S12330">
    <property type="entry name" value="RGBY23"/>
</dbReference>
<dbReference type="RefSeq" id="NP_012036.1">
    <property type="nucleotide sequence ID" value="NM_001179297.1"/>
</dbReference>
<dbReference type="PDB" id="8A3T">
    <property type="method" value="EM"/>
    <property type="resolution" value="3.50 A"/>
    <property type="chains" value="D/P=1-626"/>
</dbReference>
<dbReference type="PDB" id="8A5Y">
    <property type="method" value="EM"/>
    <property type="resolution" value="4.90 A"/>
    <property type="chains" value="D/P=1-626"/>
</dbReference>
<dbReference type="PDB" id="8A61">
    <property type="method" value="EM"/>
    <property type="resolution" value="5.40 A"/>
    <property type="chains" value="D/P=1-626"/>
</dbReference>
<dbReference type="PDBsum" id="8A3T"/>
<dbReference type="PDBsum" id="8A5Y"/>
<dbReference type="PDBsum" id="8A61"/>
<dbReference type="EMDB" id="EMD-15123"/>
<dbReference type="EMDB" id="EMD-15199"/>
<dbReference type="EMDB" id="EMD-15201"/>
<dbReference type="SMR" id="P16522"/>
<dbReference type="BioGRID" id="36600">
    <property type="interactions" value="509"/>
</dbReference>
<dbReference type="ComplexPortal" id="CPX-756">
    <property type="entry name" value="Anaphase-Promoting core complex"/>
</dbReference>
<dbReference type="ComplexPortal" id="CPX-760">
    <property type="entry name" value="Anaphase-Promoting Complex, CDC20 variant"/>
</dbReference>
<dbReference type="ComplexPortal" id="CPX-761">
    <property type="entry name" value="Anaphase-Promoting Complex, CDH1 variant"/>
</dbReference>
<dbReference type="ComplexPortal" id="CPX-762">
    <property type="entry name" value="Anaphase-Promoting complex AMA1 variant"/>
</dbReference>
<dbReference type="DIP" id="DIP-589N"/>
<dbReference type="ELM" id="P16522"/>
<dbReference type="FunCoup" id="P16522">
    <property type="interactions" value="1286"/>
</dbReference>
<dbReference type="IntAct" id="P16522">
    <property type="interactions" value="30"/>
</dbReference>
<dbReference type="MINT" id="P16522"/>
<dbReference type="STRING" id="4932.YHR166C"/>
<dbReference type="iPTMnet" id="P16522"/>
<dbReference type="PaxDb" id="4932-YHR166C"/>
<dbReference type="PeptideAtlas" id="P16522"/>
<dbReference type="EnsemblFungi" id="YHR166C_mRNA">
    <property type="protein sequence ID" value="YHR166C"/>
    <property type="gene ID" value="YHR166C"/>
</dbReference>
<dbReference type="GeneID" id="856571"/>
<dbReference type="KEGG" id="sce:YHR166C"/>
<dbReference type="AGR" id="SGD:S000001209"/>
<dbReference type="SGD" id="S000001209">
    <property type="gene designation" value="CDC23"/>
</dbReference>
<dbReference type="VEuPathDB" id="FungiDB:YHR166C"/>
<dbReference type="eggNOG" id="KOG1155">
    <property type="taxonomic scope" value="Eukaryota"/>
</dbReference>
<dbReference type="GeneTree" id="ENSGT00950000182950"/>
<dbReference type="HOGENOM" id="CLU_018320_2_1_1"/>
<dbReference type="InParanoid" id="P16522"/>
<dbReference type="OMA" id="ERCLYHS"/>
<dbReference type="OrthoDB" id="10262026at2759"/>
<dbReference type="BioCyc" id="YEAST:G3O-31200-MONOMER"/>
<dbReference type="Reactome" id="R-SCE-983168">
    <property type="pathway name" value="Antigen processing: Ubiquitination &amp; Proteasome degradation"/>
</dbReference>
<dbReference type="UniPathway" id="UPA00143"/>
<dbReference type="BioGRID-ORCS" id="856571">
    <property type="hits" value="7 hits in 10 CRISPR screens"/>
</dbReference>
<dbReference type="PRO" id="PR:P16522"/>
<dbReference type="Proteomes" id="UP000002311">
    <property type="component" value="Chromosome VIII"/>
</dbReference>
<dbReference type="RNAct" id="P16522">
    <property type="molecule type" value="protein"/>
</dbReference>
<dbReference type="GO" id="GO:0005680">
    <property type="term" value="C:anaphase-promoting complex"/>
    <property type="evidence" value="ECO:0000314"/>
    <property type="project" value="SGD"/>
</dbReference>
<dbReference type="GO" id="GO:0000776">
    <property type="term" value="C:kinetochore"/>
    <property type="evidence" value="ECO:0007669"/>
    <property type="project" value="UniProtKB-KW"/>
</dbReference>
<dbReference type="GO" id="GO:0030332">
    <property type="term" value="F:cyclin binding"/>
    <property type="evidence" value="ECO:0000353"/>
    <property type="project" value="SGD"/>
</dbReference>
<dbReference type="GO" id="GO:0031145">
    <property type="term" value="P:anaphase-promoting complex-dependent catabolic process"/>
    <property type="evidence" value="ECO:0000314"/>
    <property type="project" value="ComplexPortal"/>
</dbReference>
<dbReference type="GO" id="GO:0051301">
    <property type="term" value="P:cell division"/>
    <property type="evidence" value="ECO:0000318"/>
    <property type="project" value="GO_Central"/>
</dbReference>
<dbReference type="GO" id="GO:0045842">
    <property type="term" value="P:positive regulation of mitotic metaphase/anaphase transition"/>
    <property type="evidence" value="ECO:0000318"/>
    <property type="project" value="GO_Central"/>
</dbReference>
<dbReference type="GO" id="GO:0016567">
    <property type="term" value="P:protein ubiquitination"/>
    <property type="evidence" value="ECO:0000314"/>
    <property type="project" value="ComplexPortal"/>
</dbReference>
<dbReference type="GO" id="GO:0051445">
    <property type="term" value="P:regulation of meiotic cell cycle"/>
    <property type="evidence" value="ECO:0000303"/>
    <property type="project" value="ComplexPortal"/>
</dbReference>
<dbReference type="GO" id="GO:0007346">
    <property type="term" value="P:regulation of mitotic cell cycle"/>
    <property type="evidence" value="ECO:0000303"/>
    <property type="project" value="ComplexPortal"/>
</dbReference>
<dbReference type="FunFam" id="1.25.40.10:FF:000926">
    <property type="entry name" value="Anaphase-promoting complex subunit CDC23"/>
    <property type="match status" value="1"/>
</dbReference>
<dbReference type="Gene3D" id="1.25.40.10">
    <property type="entry name" value="Tetratricopeptide repeat domain"/>
    <property type="match status" value="3"/>
</dbReference>
<dbReference type="InterPro" id="IPR007192">
    <property type="entry name" value="APC8"/>
</dbReference>
<dbReference type="InterPro" id="IPR011990">
    <property type="entry name" value="TPR-like_helical_dom_sf"/>
</dbReference>
<dbReference type="InterPro" id="IPR019734">
    <property type="entry name" value="TPR_rpt"/>
</dbReference>
<dbReference type="PANTHER" id="PTHR12558">
    <property type="entry name" value="CELL DIVISION CYCLE 16,23,27"/>
    <property type="match status" value="1"/>
</dbReference>
<dbReference type="PANTHER" id="PTHR12558:SF10">
    <property type="entry name" value="CELL DIVISION CYCLE PROTEIN 23 HOMOLOG"/>
    <property type="match status" value="1"/>
</dbReference>
<dbReference type="Pfam" id="PF04049">
    <property type="entry name" value="ANAPC8"/>
    <property type="match status" value="1"/>
</dbReference>
<dbReference type="Pfam" id="PF13414">
    <property type="entry name" value="TPR_11"/>
    <property type="match status" value="1"/>
</dbReference>
<dbReference type="Pfam" id="PF13181">
    <property type="entry name" value="TPR_8"/>
    <property type="match status" value="3"/>
</dbReference>
<dbReference type="SMART" id="SM00028">
    <property type="entry name" value="TPR"/>
    <property type="match status" value="6"/>
</dbReference>
<dbReference type="SUPFAM" id="SSF48452">
    <property type="entry name" value="TPR-like"/>
    <property type="match status" value="3"/>
</dbReference>
<dbReference type="PROSITE" id="PS50005">
    <property type="entry name" value="TPR"/>
    <property type="match status" value="6"/>
</dbReference>
<dbReference type="PROSITE" id="PS50293">
    <property type="entry name" value="TPR_REGION"/>
    <property type="match status" value="1"/>
</dbReference>
<reference key="1">
    <citation type="journal article" date="1990" name="Gene">
        <title>Cloning and nucleotide sequence of the CDC23 gene of Saccharomyces cerevisiae.</title>
        <authorList>
            <person name="Doi A."/>
            <person name="Doi K."/>
        </authorList>
    </citation>
    <scope>NUCLEOTIDE SEQUENCE [GENOMIC DNA]</scope>
</reference>
<reference key="2">
    <citation type="journal article" date="1990" name="Cell">
        <title>A repeating amino acid motif in CDC23 defines a family of proteins and a new relationship among genes required for mitosis and RNA synthesis.</title>
        <authorList>
            <person name="Sikorski R.S."/>
            <person name="Boguski M.S."/>
            <person name="Goebl M."/>
            <person name="Hieter P.A."/>
        </authorList>
    </citation>
    <scope>NUCLEOTIDE SEQUENCE [GENOMIC DNA]</scope>
    <scope>DOMAINS TPR REPEATS</scope>
</reference>
<reference key="3">
    <citation type="journal article" date="1994" name="Science">
        <title>Complete nucleotide sequence of Saccharomyces cerevisiae chromosome VIII.</title>
        <authorList>
            <person name="Johnston M."/>
            <person name="Andrews S."/>
            <person name="Brinkman R."/>
            <person name="Cooper J."/>
            <person name="Ding H."/>
            <person name="Dover J."/>
            <person name="Du Z."/>
            <person name="Favello A."/>
            <person name="Fulton L."/>
            <person name="Gattung S."/>
            <person name="Geisel C."/>
            <person name="Kirsten J."/>
            <person name="Kucaba T."/>
            <person name="Hillier L.W."/>
            <person name="Jier M."/>
            <person name="Johnston L."/>
            <person name="Langston Y."/>
            <person name="Latreille P."/>
            <person name="Louis E.J."/>
            <person name="Macri C."/>
            <person name="Mardis E."/>
            <person name="Menezes S."/>
            <person name="Mouser L."/>
            <person name="Nhan M."/>
            <person name="Rifkin L."/>
            <person name="Riles L."/>
            <person name="St Peter H."/>
            <person name="Trevaskis E."/>
            <person name="Vaughan K."/>
            <person name="Vignati D."/>
            <person name="Wilcox L."/>
            <person name="Wohldman P."/>
            <person name="Waterston R."/>
            <person name="Wilson R."/>
            <person name="Vaudin M."/>
        </authorList>
    </citation>
    <scope>NUCLEOTIDE SEQUENCE [LARGE SCALE GENOMIC DNA]</scope>
    <source>
        <strain>ATCC 204508 / S288c</strain>
    </source>
</reference>
<reference key="4">
    <citation type="journal article" date="2014" name="G3 (Bethesda)">
        <title>The reference genome sequence of Saccharomyces cerevisiae: Then and now.</title>
        <authorList>
            <person name="Engel S.R."/>
            <person name="Dietrich F.S."/>
            <person name="Fisk D.G."/>
            <person name="Binkley G."/>
            <person name="Balakrishnan R."/>
            <person name="Costanzo M.C."/>
            <person name="Dwight S.S."/>
            <person name="Hitz B.C."/>
            <person name="Karra K."/>
            <person name="Nash R.S."/>
            <person name="Weng S."/>
            <person name="Wong E.D."/>
            <person name="Lloyd P."/>
            <person name="Skrzypek M.S."/>
            <person name="Miyasato S.R."/>
            <person name="Simison M."/>
            <person name="Cherry J.M."/>
        </authorList>
    </citation>
    <scope>GENOME REANNOTATION</scope>
    <source>
        <strain>ATCC 204508 / S288c</strain>
    </source>
</reference>
<reference key="5">
    <citation type="journal article" date="1993" name="Mol. Cell. Biol.">
        <title>p62cdc23 of Saccharomyces cerevisiae: a nuclear tetratricopeptide repeat protein with two mutable domains.</title>
        <authorList>
            <person name="Sikorski R.S."/>
            <person name="Michaud W.A."/>
            <person name="Hieter P.A."/>
        </authorList>
    </citation>
    <scope>FUNCTION</scope>
    <scope>MUTAGENESIS OF ALA-39; GLY-42; GLY-80; GLU-85; SER-93; THR-94; ARG-103; PRO-114; SER-123; GLY-213; GLU-306; PRO-326; GLU-398; ALA-404; HIS-439; GLY-472; LEU-485 AND VAL-573</scope>
</reference>
<reference key="6">
    <citation type="journal article" date="1994" name="EMBO J.">
        <title>Cdc16p, Cdc23p and Cdc27p form a complex essential for mitosis.</title>
        <authorList>
            <person name="Lamb J.R."/>
            <person name="Michaud W.A."/>
            <person name="Sikorski R.S."/>
            <person name="Hieter P.A."/>
        </authorList>
    </citation>
    <scope>FUNCTION</scope>
    <scope>SUBUNIT</scope>
</reference>
<reference key="7">
    <citation type="journal article" date="2000" name="J. Cell Biol.">
        <title>Phosphorylation by Cdc28 activates the Cdc20-dependent activity of the anaphase-promoting complex.</title>
        <authorList>
            <person name="Rudner A.D."/>
            <person name="Murray A.W."/>
        </authorList>
    </citation>
    <scope>FUNCTION</scope>
    <scope>PHOSPHORYLATION AT SER-59</scope>
</reference>
<reference key="8">
    <citation type="journal article" date="2002" name="Arch. Biochem. Biophys.">
        <title>The destruction box of the cyclin Clb2 binds the anaphase-promoting complex/cyclosome subunit Cdc23.</title>
        <authorList>
            <person name="Meyn M.A. III"/>
            <person name="Melloy P.G."/>
            <person name="Li J."/>
            <person name="Holloway S.L."/>
        </authorList>
    </citation>
    <scope>FUNCTION</scope>
    <scope>INTERACTION WITH CLB2</scope>
</reference>
<reference key="9">
    <citation type="journal article" date="2003" name="J. Biol. Chem.">
        <title>Mnd2 and Swm1 are core subunits of the Saccharomyces cerevisiae anaphase-promoting complex.</title>
        <authorList>
            <person name="Hall M.C."/>
            <person name="Torres M.P."/>
            <person name="Schroeder G.K."/>
            <person name="Borchers C.H."/>
        </authorList>
    </citation>
    <scope>FUNCTION</scope>
    <scope>SUBUNIT</scope>
    <scope>INTERACTION WITH SWM1</scope>
</reference>
<reference key="10">
    <citation type="journal article" date="2004" name="Genetics">
        <title>Changes in the localization of the Saccharomyces cerevisiae anaphase-promoting complex upon microtubule depolymerization and spindle checkpoint activation.</title>
        <authorList>
            <person name="Melloy P.G."/>
            <person name="Holloway S.L."/>
        </authorList>
    </citation>
    <scope>SUBCELLULAR LOCATION</scope>
</reference>
<reference key="11">
    <citation type="journal article" date="2003" name="Nature">
        <title>Global analysis of protein localization in budding yeast.</title>
        <authorList>
            <person name="Huh W.-K."/>
            <person name="Falvo J.V."/>
            <person name="Gerke L.C."/>
            <person name="Carroll A.S."/>
            <person name="Howson R.W."/>
            <person name="Weissman J.S."/>
            <person name="O'Shea E.K."/>
        </authorList>
    </citation>
    <scope>SUBCELLULAR LOCATION [LARGE SCALE ANALYSIS]</scope>
</reference>
<reference key="12">
    <citation type="journal article" date="2003" name="Nature">
        <title>Global analysis of protein expression in yeast.</title>
        <authorList>
            <person name="Ghaemmaghami S."/>
            <person name="Huh W.-K."/>
            <person name="Bower K."/>
            <person name="Howson R.W."/>
            <person name="Belle A."/>
            <person name="Dephoure N."/>
            <person name="O'Shea E.K."/>
            <person name="Weissman J.S."/>
        </authorList>
    </citation>
    <scope>LEVEL OF PROTEIN EXPRESSION [LARGE SCALE ANALYSIS]</scope>
</reference>
<reference key="13">
    <citation type="journal article" date="2008" name="Mol. Cell. Proteomics">
        <title>A multidimensional chromatography technology for in-depth phosphoproteome analysis.</title>
        <authorList>
            <person name="Albuquerque C.P."/>
            <person name="Smolka M.B."/>
            <person name="Payne S.H."/>
            <person name="Bafna V."/>
            <person name="Eng J."/>
            <person name="Zhou H."/>
        </authorList>
    </citation>
    <scope>PHOSPHORYLATION [LARGE SCALE ANALYSIS] AT SER-59</scope>
    <scope>IDENTIFICATION BY MASS SPECTROMETRY [LARGE SCALE ANALYSIS]</scope>
</reference>
<sequence length="626" mass="73114">MNDDSQDKIIHDIRIQLRKAATELSRWKLYGSSKWAAEALAGLAEAIDVDQTHSLADESPLRNKQGVPKQMFEIPQNGFGLSETEYDLYLLGSTLFDAKEFDRCVFFLKDVTNPYLKFLKLYSKFLSWDKKSQESMENILTTGKFTDEMYRANKDGDGSGNEDINQSGHQRANLKMVSNEHESQSNISSILKEINTFLESYEIKIDDDEADLGLALLYYLRGVILKQEKNISKAMSSFLKSLSCYSFNWSCWLELMDCLQKVDDALLLNNYLYQNFQFKFSENLGSQRTIEFNIMIKFFKLKVFEELNGQLEDYFEDLEFLLQVFPNFTFLKAYNATISYNNLDYVTAESRFDDIVKQDPYRLNDLETYSNILYVMQKNSKLAYLAQFVSQIDRFRPETCCIIANYYSARQEHEKSIMYFRRALTLDKKTTNAWTLMGHEFVELSNSHAAIECYRRAVDICPRDFKAWFGLGQAYALLDMHLYSLYYFQKACTLKPWDRRIWQVLGECYSKTGNKVEAIKCYKRSIKASQTVDQNTSIYYRLAQLYEELEDLQECKKFMMKCVDVEELLEGIVTDETVKARLWLAIFEIKAGNYQLAYDYAMGVSSGTSQEIEEARMLARECRRHM</sequence>
<feature type="chain" id="PRO_0000106272" description="Anaphase-promoting complex subunit CDC23">
    <location>
        <begin position="1"/>
        <end position="626"/>
    </location>
</feature>
<feature type="repeat" description="TPR 1">
    <location>
        <begin position="215"/>
        <end position="248"/>
    </location>
</feature>
<feature type="repeat" description="TPR 2">
    <location>
        <begin position="295"/>
        <end position="328"/>
    </location>
</feature>
<feature type="repeat" description="TPR 3">
    <location>
        <begin position="329"/>
        <end position="362"/>
    </location>
</feature>
<feature type="repeat" description="TPR 4">
    <location>
        <begin position="363"/>
        <end position="396"/>
    </location>
</feature>
<feature type="repeat" description="TPR 5">
    <location>
        <begin position="397"/>
        <end position="430"/>
    </location>
</feature>
<feature type="repeat" description="TPR 6">
    <location>
        <begin position="431"/>
        <end position="464"/>
    </location>
</feature>
<feature type="repeat" description="TPR 7">
    <location>
        <begin position="465"/>
        <end position="498"/>
    </location>
</feature>
<feature type="repeat" description="TPR 8">
    <location>
        <begin position="499"/>
        <end position="532"/>
    </location>
</feature>
<feature type="repeat" description="TPR 9">
    <location>
        <begin position="536"/>
        <end position="569"/>
    </location>
</feature>
<feature type="modified residue" description="Phosphoserine; by CDC28" evidence="1 8">
    <location>
        <position position="59"/>
    </location>
</feature>
<feature type="mutagenesis site" description="In CDC23-50; G2/M cell cycle arrest at 37 degrees Celsius." evidence="6">
    <original>A</original>
    <variation>T</variation>
    <location>
        <position position="39"/>
    </location>
</feature>
<feature type="mutagenesis site" description="In CDC23-54; G2/M cell cycle arrest at 37 degrees Celsius." evidence="6">
    <original>G</original>
    <variation>D</variation>
    <location>
        <position position="42"/>
    </location>
</feature>
<feature type="mutagenesis site" description="In CDC23-44; G2/M cell cycle arrest at 37 degrees Celsius." evidence="6">
    <original>G</original>
    <variation>S</variation>
    <location>
        <position position="80"/>
    </location>
</feature>
<feature type="mutagenesis site" description="In CDC23-51; G2/M cell cycle arrest at 37 degrees Celsius." evidence="6">
    <original>E</original>
    <variation>K</variation>
    <location>
        <position position="85"/>
    </location>
</feature>
<feature type="mutagenesis site" description="In CDC23-52; G2/M cell cycle arrest at 37 degrees Celsius." evidence="6">
    <original>S</original>
    <variation>F</variation>
    <location>
        <position position="93"/>
    </location>
</feature>
<feature type="mutagenesis site" description="In CDC23-4; G2/M cell cycle arrest at 36 degrees Celsius." evidence="6">
    <original>T</original>
    <variation>M</variation>
    <location>
        <position position="94"/>
    </location>
</feature>
<feature type="mutagenesis site" description="In CDC23-40; G2/M cell cycle arrest at 37 degrees Celsius; when associated with V-573." evidence="6">
    <original>R</original>
    <variation>Q</variation>
    <location>
        <position position="103"/>
    </location>
</feature>
<feature type="mutagenesis site" description="In CDC23-53; G2/M cell cycle arrest at 37 degrees Celsius." evidence="6">
    <original>P</original>
    <variation>L</variation>
    <location>
        <position position="114"/>
    </location>
</feature>
<feature type="mutagenesis site" description="In CDC23-41; G2/M cell cycle arrest at 37 degrees Celsius." evidence="6">
    <original>P</original>
    <variation>S</variation>
    <location>
        <position position="114"/>
    </location>
</feature>
<feature type="mutagenesis site" description="In CDC23-6; G2/M cell cycle arrest at 36 degrees Celsius." evidence="6">
    <original>S</original>
    <variation>N</variation>
    <location>
        <position position="123"/>
    </location>
</feature>
<feature type="mutagenesis site" description="In CDC23-47; G2/M cell cycle arrest at 37 degrees Celsius; when associated with W-583." evidence="6">
    <original>G</original>
    <variation>D</variation>
    <location>
        <position position="213"/>
    </location>
</feature>
<feature type="mutagenesis site" description="In CDC23-49; G2/M cell cycle arrest at 37 degrees Celsius; when associated with P-326." evidence="6">
    <original>E</original>
    <variation>K</variation>
    <location>
        <position position="306"/>
    </location>
</feature>
<feature type="mutagenesis site" description="In CDC23-49; G2/M cell cycle arrest at 37 degrees Celsius; when associated with E-306." evidence="6">
    <original>P</original>
    <variation>L</variation>
    <location>
        <position position="326"/>
    </location>
</feature>
<feature type="mutagenesis site" description="In CDC23-37; G2/M cell cycle arrest at 30 degrees Celsius." evidence="6">
    <original>E</original>
    <variation>K</variation>
    <location>
        <position position="398"/>
    </location>
</feature>
<feature type="mutagenesis site" description="In CDC23-39; G2/M cell cycle arrest at 37 degrees Celsius." evidence="6">
    <original>A</original>
    <variation>T</variation>
    <location>
        <position position="404"/>
    </location>
</feature>
<feature type="mutagenesis site" description="In CDC23-2; G2/M cell cycle arrest at 36 degrees Celsius." evidence="6">
    <original>H</original>
    <variation>R</variation>
    <location>
        <position position="439"/>
    </location>
</feature>
<feature type="mutagenesis site" description="In CDC23-1; G2/M cell cycle arrest at 36 degrees Celsius." evidence="6">
    <original>G</original>
    <variation>D</variation>
    <location>
        <position position="472"/>
    </location>
</feature>
<feature type="mutagenesis site" description="In CDC23-56; G2/M cell cycle arrest at 37 degrees Celsius." evidence="6">
    <original>L</original>
    <variation>F</variation>
    <location>
        <position position="485"/>
    </location>
</feature>
<feature type="mutagenesis site" description="In CDC23-40; G2/M cell cycle arrest at 37 degrees Celsius; when associated with R-103." evidence="6">
    <original>V</original>
    <variation>I</variation>
    <location>
        <position position="573"/>
    </location>
</feature>
<feature type="mutagenesis site" description="In CDC23-47; G2/M cell cycle arrest at 37 degrees Celsius; when associated with G-213.">
    <location>
        <begin position="583"/>
        <end position="626"/>
    </location>
</feature>
<feature type="helix" evidence="9">
    <location>
        <begin position="5"/>
        <end position="26"/>
    </location>
</feature>
<feature type="helix" evidence="9">
    <location>
        <begin position="30"/>
        <end position="41"/>
    </location>
</feature>
<feature type="helix" evidence="9">
    <location>
        <begin position="83"/>
        <end position="97"/>
    </location>
</feature>
<feature type="helix" evidence="9">
    <location>
        <begin position="101"/>
        <end position="107"/>
    </location>
</feature>
<feature type="helix" evidence="9">
    <location>
        <begin position="114"/>
        <end position="135"/>
    </location>
</feature>
<feature type="helix" evidence="9">
    <location>
        <begin position="185"/>
        <end position="200"/>
    </location>
</feature>
<feature type="strand" evidence="9">
    <location>
        <begin position="205"/>
        <end position="209"/>
    </location>
</feature>
<feature type="helix" evidence="9">
    <location>
        <begin position="212"/>
        <end position="226"/>
    </location>
</feature>
<feature type="turn" evidence="9">
    <location>
        <begin position="227"/>
        <end position="229"/>
    </location>
</feature>
<feature type="turn" evidence="9">
    <location>
        <begin position="231"/>
        <end position="233"/>
    </location>
</feature>
<feature type="helix" evidence="9">
    <location>
        <begin position="234"/>
        <end position="244"/>
    </location>
</feature>
<feature type="helix" evidence="9">
    <location>
        <begin position="249"/>
        <end position="258"/>
    </location>
</feature>
<feature type="helix" evidence="9">
    <location>
        <begin position="262"/>
        <end position="271"/>
    </location>
</feature>
<feature type="turn" evidence="9">
    <location>
        <begin position="280"/>
        <end position="282"/>
    </location>
</feature>
<feature type="turn" evidence="9">
    <location>
        <begin position="285"/>
        <end position="287"/>
    </location>
</feature>
<feature type="helix" evidence="9">
    <location>
        <begin position="295"/>
        <end position="306"/>
    </location>
</feature>
<feature type="helix" evidence="9">
    <location>
        <begin position="315"/>
        <end position="324"/>
    </location>
</feature>
<feature type="helix" evidence="9">
    <location>
        <begin position="329"/>
        <end position="341"/>
    </location>
</feature>
<feature type="helix" evidence="9">
    <location>
        <begin position="345"/>
        <end position="358"/>
    </location>
</feature>
<feature type="helix" evidence="9">
    <location>
        <begin position="366"/>
        <end position="376"/>
    </location>
</feature>
<feature type="helix" evidence="9">
    <location>
        <begin position="379"/>
        <end position="392"/>
    </location>
</feature>
<feature type="helix" evidence="9">
    <location>
        <begin position="399"/>
        <end position="409"/>
    </location>
</feature>
<feature type="helix" evidence="9">
    <location>
        <begin position="413"/>
        <end position="426"/>
    </location>
</feature>
<feature type="helix" evidence="9">
    <location>
        <begin position="432"/>
        <end position="442"/>
    </location>
</feature>
<feature type="turn" evidence="9">
    <location>
        <begin position="443"/>
        <end position="445"/>
    </location>
</feature>
<feature type="helix" evidence="9">
    <location>
        <begin position="447"/>
        <end position="460"/>
    </location>
</feature>
<feature type="helix" evidence="9">
    <location>
        <begin position="465"/>
        <end position="477"/>
    </location>
</feature>
<feature type="helix" evidence="9">
    <location>
        <begin position="482"/>
        <end position="484"/>
    </location>
</feature>
<feature type="helix" evidence="9">
    <location>
        <begin position="485"/>
        <end position="494"/>
    </location>
</feature>
<feature type="helix" evidence="9">
    <location>
        <begin position="499"/>
        <end position="511"/>
    </location>
</feature>
<feature type="helix" evidence="9">
    <location>
        <begin position="515"/>
        <end position="528"/>
    </location>
</feature>
<feature type="strand" evidence="9">
    <location>
        <begin position="530"/>
        <end position="532"/>
    </location>
</feature>
<feature type="helix" evidence="9">
    <location>
        <begin position="533"/>
        <end position="535"/>
    </location>
</feature>
<feature type="helix" evidence="9">
    <location>
        <begin position="536"/>
        <end position="549"/>
    </location>
</feature>
<feature type="helix" evidence="9">
    <location>
        <begin position="552"/>
        <end position="568"/>
    </location>
</feature>
<feature type="helix" evidence="9">
    <location>
        <begin position="575"/>
        <end position="590"/>
    </location>
</feature>
<feature type="helix" evidence="9">
    <location>
        <begin position="594"/>
        <end position="603"/>
    </location>
</feature>
<feature type="turn" evidence="9">
    <location>
        <begin position="604"/>
        <end position="606"/>
    </location>
</feature>
<feature type="helix" evidence="9">
    <location>
        <begin position="609"/>
        <end position="625"/>
    </location>
</feature>
<protein>
    <recommendedName>
        <fullName>Anaphase-promoting complex subunit CDC23</fullName>
    </recommendedName>
    <alternativeName>
        <fullName>Cell division control protein 23</fullName>
    </alternativeName>
</protein>
<name>CDC23_YEAST</name>
<keyword id="KW-0002">3D-structure</keyword>
<keyword id="KW-0131">Cell cycle</keyword>
<keyword id="KW-0132">Cell division</keyword>
<keyword id="KW-0137">Centromere</keyword>
<keyword id="KW-0158">Chromosome</keyword>
<keyword id="KW-0995">Kinetochore</keyword>
<keyword id="KW-0498">Mitosis</keyword>
<keyword id="KW-0539">Nucleus</keyword>
<keyword id="KW-0597">Phosphoprotein</keyword>
<keyword id="KW-1185">Reference proteome</keyword>
<keyword id="KW-0677">Repeat</keyword>
<keyword id="KW-0802">TPR repeat</keyword>
<keyword id="KW-0833">Ubl conjugation pathway</keyword>
<evidence type="ECO:0000269" key="1">
    <source>
    </source>
</evidence>
<evidence type="ECO:0000269" key="2">
    <source>
    </source>
</evidence>
<evidence type="ECO:0000269" key="3">
    <source>
    </source>
</evidence>
<evidence type="ECO:0000269" key="4">
    <source>
    </source>
</evidence>
<evidence type="ECO:0000269" key="5">
    <source>
    </source>
</evidence>
<evidence type="ECO:0000269" key="6">
    <source>
    </source>
</evidence>
<evidence type="ECO:0000305" key="7"/>
<evidence type="ECO:0007744" key="8">
    <source>
    </source>
</evidence>
<evidence type="ECO:0007829" key="9">
    <source>
        <dbReference type="PDB" id="8A3T"/>
    </source>
</evidence>
<accession>P16522</accession>
<accession>D3DLB5</accession>
<proteinExistence type="evidence at protein level"/>
<organism>
    <name type="scientific">Saccharomyces cerevisiae (strain ATCC 204508 / S288c)</name>
    <name type="common">Baker's yeast</name>
    <dbReference type="NCBI Taxonomy" id="559292"/>
    <lineage>
        <taxon>Eukaryota</taxon>
        <taxon>Fungi</taxon>
        <taxon>Dikarya</taxon>
        <taxon>Ascomycota</taxon>
        <taxon>Saccharomycotina</taxon>
        <taxon>Saccharomycetes</taxon>
        <taxon>Saccharomycetales</taxon>
        <taxon>Saccharomycetaceae</taxon>
        <taxon>Saccharomyces</taxon>
    </lineage>
</organism>
<comment type="function">
    <text evidence="1 2 3 5 6">Component of the anaphase promoting complex/cyclosome (APC/C), a cell cycle-regulated E3 ubiquitin-protein ligase complex that controls progression through mitosis and the G1 phase of the cell cycle. The APC/C is thought to confer substrate specificity and, in the presence of ubiquitin-conjugating E2 enzymes, it catalyzes the formation of protein-ubiquitin conjugates that are subsequently degraded by the 26S proteasome. In early mitosis, the APC/C is activated by CDC20 and targets securin PDS1, the B-type cyclin CLB5, and other anaphase inhibitory proteins for proteolysis, thereby triggering the separation of sister chromatids at the metaphase-to-anaphase transition. In late mitosis and in G1, degradation of CLB5 allows activation of the APC/C by CDH1, which is needed to destroy CDC20 and the B-type cyclin CLB2 to allow exit from mitosis and creating the low CDK state necessary for cytokinesis and for reforming prereplicative complexes in G1 prior to another round of replication.</text>
</comment>
<comment type="pathway">
    <text>Protein modification; protein ubiquitination.</text>
</comment>
<comment type="subunit">
    <text evidence="2 3 5">The APC/C is composed of at least 13 subunits that stay tightly associated throughout the cell cycle: APC1, APC2, APC4, APC5, APC9, APC11, CDC16, CDC23, CDC26, CDC27, DOC1, MND2 and SWM1. CDC23 interacts directly with SWM1 and binds the destruction box (D-box) of the substrate cyclin CLB2.</text>
</comment>
<comment type="interaction">
    <interactant intactId="EBI-4216">
        <id>P16522</id>
    </interactant>
    <interactant intactId="EBI-25433">
        <id>P40577</id>
        <label>MND2</label>
    </interactant>
    <organismsDiffer>false</organismsDiffer>
    <experiments>4</experiments>
</comment>
<comment type="interaction">
    <interactant intactId="EBI-4216">
        <id>P16522</id>
    </interactant>
    <interactant intactId="EBI-33330">
        <id>Q12379</id>
        <label>SWM1</label>
    </interactant>
    <organismsDiffer>false</organismsDiffer>
    <experiments>6</experiments>
</comment>
<comment type="subcellular location">
    <subcellularLocation>
        <location>Nucleus</location>
    </subcellularLocation>
    <subcellularLocation>
        <location>Chromosome</location>
        <location>Centromere</location>
        <location>Kinetochore</location>
    </subcellularLocation>
    <text>Associated with the kinetochore.</text>
</comment>
<comment type="PTM">
    <text evidence="1">Phosphorylated by CDC28, which is required for the early mitotic activity of the APC/C in its CDC20-bound form.</text>
</comment>
<comment type="miscellaneous">
    <text evidence="4">Present with 80 molecules/cell in log phase SD medium.</text>
</comment>
<comment type="similarity">
    <text evidence="7">Belongs to the APC8/CDC23 family.</text>
</comment>